<accession>B3QY20</accession>
<name>RS7_CHLT3</name>
<organism>
    <name type="scientific">Chloroherpeton thalassium (strain ATCC 35110 / GB-78)</name>
    <dbReference type="NCBI Taxonomy" id="517418"/>
    <lineage>
        <taxon>Bacteria</taxon>
        <taxon>Pseudomonadati</taxon>
        <taxon>Chlorobiota</taxon>
        <taxon>Chlorobiia</taxon>
        <taxon>Chlorobiales</taxon>
        <taxon>Chloroherpetonaceae</taxon>
        <taxon>Chloroherpeton</taxon>
    </lineage>
</organism>
<protein>
    <recommendedName>
        <fullName evidence="1">Small ribosomal subunit protein uS7</fullName>
    </recommendedName>
    <alternativeName>
        <fullName evidence="2">30S ribosomal protein S7</fullName>
    </alternativeName>
</protein>
<comment type="function">
    <text evidence="1">One of the primary rRNA binding proteins, it binds directly to 16S rRNA where it nucleates assembly of the head domain of the 30S subunit. Is located at the subunit interface close to the decoding center, probably blocks exit of the E-site tRNA.</text>
</comment>
<comment type="subunit">
    <text evidence="1">Part of the 30S ribosomal subunit. Contacts proteins S9 and S11.</text>
</comment>
<comment type="similarity">
    <text evidence="1">Belongs to the universal ribosomal protein uS7 family.</text>
</comment>
<proteinExistence type="inferred from homology"/>
<gene>
    <name evidence="1" type="primary">rpsG</name>
    <name type="ordered locus">Ctha_1084</name>
</gene>
<keyword id="KW-1185">Reference proteome</keyword>
<keyword id="KW-0687">Ribonucleoprotein</keyword>
<keyword id="KW-0689">Ribosomal protein</keyword>
<keyword id="KW-0694">RNA-binding</keyword>
<keyword id="KW-0699">rRNA-binding</keyword>
<keyword id="KW-0820">tRNA-binding</keyword>
<feature type="chain" id="PRO_1000125916" description="Small ribosomal subunit protein uS7">
    <location>
        <begin position="1"/>
        <end position="155"/>
    </location>
</feature>
<dbReference type="EMBL" id="CP001100">
    <property type="protein sequence ID" value="ACF13548.1"/>
    <property type="molecule type" value="Genomic_DNA"/>
</dbReference>
<dbReference type="RefSeq" id="WP_012499632.1">
    <property type="nucleotide sequence ID" value="NC_011026.1"/>
</dbReference>
<dbReference type="SMR" id="B3QY20"/>
<dbReference type="STRING" id="517418.Ctha_1084"/>
<dbReference type="KEGG" id="cts:Ctha_1084"/>
<dbReference type="eggNOG" id="COG0049">
    <property type="taxonomic scope" value="Bacteria"/>
</dbReference>
<dbReference type="HOGENOM" id="CLU_072226_1_1_10"/>
<dbReference type="OrthoDB" id="9807653at2"/>
<dbReference type="Proteomes" id="UP000001208">
    <property type="component" value="Chromosome"/>
</dbReference>
<dbReference type="GO" id="GO:0015935">
    <property type="term" value="C:small ribosomal subunit"/>
    <property type="evidence" value="ECO:0007669"/>
    <property type="project" value="InterPro"/>
</dbReference>
<dbReference type="GO" id="GO:0019843">
    <property type="term" value="F:rRNA binding"/>
    <property type="evidence" value="ECO:0007669"/>
    <property type="project" value="UniProtKB-UniRule"/>
</dbReference>
<dbReference type="GO" id="GO:0003735">
    <property type="term" value="F:structural constituent of ribosome"/>
    <property type="evidence" value="ECO:0007669"/>
    <property type="project" value="InterPro"/>
</dbReference>
<dbReference type="GO" id="GO:0000049">
    <property type="term" value="F:tRNA binding"/>
    <property type="evidence" value="ECO:0007669"/>
    <property type="project" value="UniProtKB-UniRule"/>
</dbReference>
<dbReference type="GO" id="GO:0006412">
    <property type="term" value="P:translation"/>
    <property type="evidence" value="ECO:0007669"/>
    <property type="project" value="UniProtKB-UniRule"/>
</dbReference>
<dbReference type="CDD" id="cd14869">
    <property type="entry name" value="uS7_Bacteria"/>
    <property type="match status" value="1"/>
</dbReference>
<dbReference type="FunFam" id="1.10.455.10:FF:000001">
    <property type="entry name" value="30S ribosomal protein S7"/>
    <property type="match status" value="1"/>
</dbReference>
<dbReference type="Gene3D" id="1.10.455.10">
    <property type="entry name" value="Ribosomal protein S7 domain"/>
    <property type="match status" value="1"/>
</dbReference>
<dbReference type="HAMAP" id="MF_00480_B">
    <property type="entry name" value="Ribosomal_uS7_B"/>
    <property type="match status" value="1"/>
</dbReference>
<dbReference type="InterPro" id="IPR000235">
    <property type="entry name" value="Ribosomal_uS7"/>
</dbReference>
<dbReference type="InterPro" id="IPR005717">
    <property type="entry name" value="Ribosomal_uS7_bac/org-type"/>
</dbReference>
<dbReference type="InterPro" id="IPR020606">
    <property type="entry name" value="Ribosomal_uS7_CS"/>
</dbReference>
<dbReference type="InterPro" id="IPR023798">
    <property type="entry name" value="Ribosomal_uS7_dom"/>
</dbReference>
<dbReference type="InterPro" id="IPR036823">
    <property type="entry name" value="Ribosomal_uS7_dom_sf"/>
</dbReference>
<dbReference type="NCBIfam" id="TIGR01029">
    <property type="entry name" value="rpsG_bact"/>
    <property type="match status" value="1"/>
</dbReference>
<dbReference type="PANTHER" id="PTHR11205">
    <property type="entry name" value="RIBOSOMAL PROTEIN S7"/>
    <property type="match status" value="1"/>
</dbReference>
<dbReference type="Pfam" id="PF00177">
    <property type="entry name" value="Ribosomal_S7"/>
    <property type="match status" value="1"/>
</dbReference>
<dbReference type="PIRSF" id="PIRSF002122">
    <property type="entry name" value="RPS7p_RPS7a_RPS5e_RPS7o"/>
    <property type="match status" value="1"/>
</dbReference>
<dbReference type="SUPFAM" id="SSF47973">
    <property type="entry name" value="Ribosomal protein S7"/>
    <property type="match status" value="1"/>
</dbReference>
<dbReference type="PROSITE" id="PS00052">
    <property type="entry name" value="RIBOSOMAL_S7"/>
    <property type="match status" value="1"/>
</dbReference>
<sequence length="155" mass="17492">MRRKAASKRLTLTDQRFNDEIIYRLINAVMIDGKKSVATKVVYDAMDIVGEKSEESALDVFHKAMTNISPVVEVRGKRVGGATYQIPMEVRAERRVALALRWLKKYSESRSGKSMATRLAAEILDASNSQGSAVKKREEVHKMAEANKAFSHFRF</sequence>
<evidence type="ECO:0000255" key="1">
    <source>
        <dbReference type="HAMAP-Rule" id="MF_00480"/>
    </source>
</evidence>
<evidence type="ECO:0000305" key="2"/>
<reference key="1">
    <citation type="submission" date="2008-06" db="EMBL/GenBank/DDBJ databases">
        <title>Complete sequence of Chloroherpeton thalassium ATCC 35110.</title>
        <authorList>
            <consortium name="US DOE Joint Genome Institute"/>
            <person name="Lucas S."/>
            <person name="Copeland A."/>
            <person name="Lapidus A."/>
            <person name="Glavina del Rio T."/>
            <person name="Dalin E."/>
            <person name="Tice H."/>
            <person name="Bruce D."/>
            <person name="Goodwin L."/>
            <person name="Pitluck S."/>
            <person name="Schmutz J."/>
            <person name="Larimer F."/>
            <person name="Land M."/>
            <person name="Hauser L."/>
            <person name="Kyrpides N."/>
            <person name="Mikhailova N."/>
            <person name="Liu Z."/>
            <person name="Li T."/>
            <person name="Zhao F."/>
            <person name="Overmann J."/>
            <person name="Bryant D.A."/>
            <person name="Richardson P."/>
        </authorList>
    </citation>
    <scope>NUCLEOTIDE SEQUENCE [LARGE SCALE GENOMIC DNA]</scope>
    <source>
        <strain>ATCC 35110 / GB-78</strain>
    </source>
</reference>